<keyword id="KW-0687">Ribonucleoprotein</keyword>
<keyword id="KW-0689">Ribosomal protein</keyword>
<keyword id="KW-0694">RNA-binding</keyword>
<keyword id="KW-0699">rRNA-binding</keyword>
<gene>
    <name evidence="1" type="primary">rpsF</name>
    <name type="ordered locus">mll7846</name>
</gene>
<protein>
    <recommendedName>
        <fullName evidence="1">Small ribosomal subunit protein bS6</fullName>
    </recommendedName>
    <alternativeName>
        <fullName evidence="3">30S ribosomal protein S6</fullName>
    </alternativeName>
</protein>
<sequence>MALYEHVFLARQDLSQQQVDALVEQYKGVISANGGSVGRVENWGLKSLTYRVNKNRKAYYTLMDLNCPPAALNEMERQMGLSEDVLRFLTIKVEAHEEGPSAMMQKREERSERGSFGDRDRGDRGPRSFGDRDRGDRGDRPPRSFGDAGGDRGPRRPREGFEGGAE</sequence>
<evidence type="ECO:0000255" key="1">
    <source>
        <dbReference type="HAMAP-Rule" id="MF_00360"/>
    </source>
</evidence>
<evidence type="ECO:0000256" key="2">
    <source>
        <dbReference type="SAM" id="MobiDB-lite"/>
    </source>
</evidence>
<evidence type="ECO:0000305" key="3"/>
<accession>Q984T8</accession>
<organism>
    <name type="scientific">Mesorhizobium japonicum (strain LMG 29417 / CECT 9101 / MAFF 303099)</name>
    <name type="common">Mesorhizobium loti (strain MAFF 303099)</name>
    <dbReference type="NCBI Taxonomy" id="266835"/>
    <lineage>
        <taxon>Bacteria</taxon>
        <taxon>Pseudomonadati</taxon>
        <taxon>Pseudomonadota</taxon>
        <taxon>Alphaproteobacteria</taxon>
        <taxon>Hyphomicrobiales</taxon>
        <taxon>Phyllobacteriaceae</taxon>
        <taxon>Mesorhizobium</taxon>
    </lineage>
</organism>
<reference key="1">
    <citation type="journal article" date="2000" name="DNA Res.">
        <title>Complete genome structure of the nitrogen-fixing symbiotic bacterium Mesorhizobium loti.</title>
        <authorList>
            <person name="Kaneko T."/>
            <person name="Nakamura Y."/>
            <person name="Sato S."/>
            <person name="Asamizu E."/>
            <person name="Kato T."/>
            <person name="Sasamoto S."/>
            <person name="Watanabe A."/>
            <person name="Idesawa K."/>
            <person name="Ishikawa A."/>
            <person name="Kawashima K."/>
            <person name="Kimura T."/>
            <person name="Kishida Y."/>
            <person name="Kiyokawa C."/>
            <person name="Kohara M."/>
            <person name="Matsumoto M."/>
            <person name="Matsuno A."/>
            <person name="Mochizuki Y."/>
            <person name="Nakayama S."/>
            <person name="Nakazaki N."/>
            <person name="Shimpo S."/>
            <person name="Sugimoto M."/>
            <person name="Takeuchi C."/>
            <person name="Yamada M."/>
            <person name="Tabata S."/>
        </authorList>
    </citation>
    <scope>NUCLEOTIDE SEQUENCE [LARGE SCALE GENOMIC DNA]</scope>
    <source>
        <strain>LMG 29417 / CECT 9101 / MAFF 303099</strain>
    </source>
</reference>
<proteinExistence type="inferred from homology"/>
<feature type="chain" id="PRO_0000176823" description="Small ribosomal subunit protein bS6">
    <location>
        <begin position="1"/>
        <end position="166"/>
    </location>
</feature>
<feature type="region of interest" description="Disordered" evidence="2">
    <location>
        <begin position="96"/>
        <end position="166"/>
    </location>
</feature>
<feature type="compositionally biased region" description="Basic and acidic residues" evidence="2">
    <location>
        <begin position="96"/>
        <end position="142"/>
    </location>
</feature>
<feature type="compositionally biased region" description="Basic and acidic residues" evidence="2">
    <location>
        <begin position="149"/>
        <end position="166"/>
    </location>
</feature>
<dbReference type="EMBL" id="BA000012">
    <property type="protein sequence ID" value="BAB54225.1"/>
    <property type="molecule type" value="Genomic_DNA"/>
</dbReference>
<dbReference type="RefSeq" id="WP_010915168.1">
    <property type="nucleotide sequence ID" value="NC_002678.2"/>
</dbReference>
<dbReference type="SMR" id="Q984T8"/>
<dbReference type="GeneID" id="66684951"/>
<dbReference type="KEGG" id="mlo:mll7846"/>
<dbReference type="eggNOG" id="COG0360">
    <property type="taxonomic scope" value="Bacteria"/>
</dbReference>
<dbReference type="HOGENOM" id="CLU_113441_2_0_5"/>
<dbReference type="Proteomes" id="UP000000552">
    <property type="component" value="Chromosome"/>
</dbReference>
<dbReference type="GO" id="GO:0022627">
    <property type="term" value="C:cytosolic small ribosomal subunit"/>
    <property type="evidence" value="ECO:0007669"/>
    <property type="project" value="TreeGrafter"/>
</dbReference>
<dbReference type="GO" id="GO:0070181">
    <property type="term" value="F:small ribosomal subunit rRNA binding"/>
    <property type="evidence" value="ECO:0007669"/>
    <property type="project" value="TreeGrafter"/>
</dbReference>
<dbReference type="GO" id="GO:0003735">
    <property type="term" value="F:structural constituent of ribosome"/>
    <property type="evidence" value="ECO:0007669"/>
    <property type="project" value="InterPro"/>
</dbReference>
<dbReference type="GO" id="GO:0006412">
    <property type="term" value="P:translation"/>
    <property type="evidence" value="ECO:0007669"/>
    <property type="project" value="UniProtKB-UniRule"/>
</dbReference>
<dbReference type="CDD" id="cd00473">
    <property type="entry name" value="bS6"/>
    <property type="match status" value="1"/>
</dbReference>
<dbReference type="Gene3D" id="3.30.70.60">
    <property type="match status" value="1"/>
</dbReference>
<dbReference type="HAMAP" id="MF_00360">
    <property type="entry name" value="Ribosomal_bS6"/>
    <property type="match status" value="1"/>
</dbReference>
<dbReference type="InterPro" id="IPR000529">
    <property type="entry name" value="Ribosomal_bS6"/>
</dbReference>
<dbReference type="InterPro" id="IPR035980">
    <property type="entry name" value="Ribosomal_bS6_sf"/>
</dbReference>
<dbReference type="InterPro" id="IPR020814">
    <property type="entry name" value="Ribosomal_S6_plastid/chlpt"/>
</dbReference>
<dbReference type="InterPro" id="IPR014717">
    <property type="entry name" value="Transl_elong_EF1B/ribsomal_bS6"/>
</dbReference>
<dbReference type="NCBIfam" id="TIGR00166">
    <property type="entry name" value="S6"/>
    <property type="match status" value="1"/>
</dbReference>
<dbReference type="PANTHER" id="PTHR21011">
    <property type="entry name" value="MITOCHONDRIAL 28S RIBOSOMAL PROTEIN S6"/>
    <property type="match status" value="1"/>
</dbReference>
<dbReference type="PANTHER" id="PTHR21011:SF1">
    <property type="entry name" value="SMALL RIBOSOMAL SUBUNIT PROTEIN BS6M"/>
    <property type="match status" value="1"/>
</dbReference>
<dbReference type="Pfam" id="PF01250">
    <property type="entry name" value="Ribosomal_S6"/>
    <property type="match status" value="1"/>
</dbReference>
<dbReference type="SUPFAM" id="SSF54995">
    <property type="entry name" value="Ribosomal protein S6"/>
    <property type="match status" value="1"/>
</dbReference>
<name>RS6_RHILO</name>
<comment type="function">
    <text evidence="1">Binds together with bS18 to 16S ribosomal RNA.</text>
</comment>
<comment type="similarity">
    <text evidence="1">Belongs to the bacterial ribosomal protein bS6 family.</text>
</comment>